<accession>Q8FCQ2</accession>
<proteinExistence type="inferred from homology"/>
<evidence type="ECO:0000255" key="1">
    <source>
        <dbReference type="HAMAP-Rule" id="MF_01727"/>
    </source>
</evidence>
<evidence type="ECO:0000305" key="2"/>
<keyword id="KW-0067">ATP-binding</keyword>
<keyword id="KW-0997">Cell inner membrane</keyword>
<keyword id="KW-1003">Cell membrane</keyword>
<keyword id="KW-0472">Membrane</keyword>
<keyword id="KW-0547">Nucleotide-binding</keyword>
<keyword id="KW-1185">Reference proteome</keyword>
<keyword id="KW-0762">Sugar transport</keyword>
<keyword id="KW-1278">Translocase</keyword>
<keyword id="KW-0813">Transport</keyword>
<reference key="1">
    <citation type="journal article" date="2002" name="Proc. Natl. Acad. Sci. U.S.A.">
        <title>Extensive mosaic structure revealed by the complete genome sequence of uropathogenic Escherichia coli.</title>
        <authorList>
            <person name="Welch R.A."/>
            <person name="Burland V."/>
            <person name="Plunkett G. III"/>
            <person name="Redford P."/>
            <person name="Roesch P."/>
            <person name="Rasko D."/>
            <person name="Buckles E.L."/>
            <person name="Liou S.-R."/>
            <person name="Boutin A."/>
            <person name="Hackett J."/>
            <person name="Stroud D."/>
            <person name="Mayhew G.F."/>
            <person name="Rose D.J."/>
            <person name="Zhou S."/>
            <person name="Schwartz D.C."/>
            <person name="Perna N.T."/>
            <person name="Mobley H.L.T."/>
            <person name="Donnenberg M.S."/>
            <person name="Blattner F.R."/>
        </authorList>
    </citation>
    <scope>NUCLEOTIDE SEQUENCE [LARGE SCALE GENOMIC DNA]</scope>
    <source>
        <strain>CFT073 / ATCC 700928 / UPEC</strain>
    </source>
</reference>
<name>UGPC_ECOL6</name>
<comment type="function">
    <text evidence="1">Part of the ABC transporter complex UgpBAEC involved in sn-glycerol-3-phosphate (G3P) import. Responsible for energy coupling to the transport system.</text>
</comment>
<comment type="catalytic activity">
    <reaction evidence="1">
        <text>sn-glycerol 3-phosphate(out) + ATP + H2O = sn-glycerol 3-phosphate(in) + ADP + phosphate + H(+)</text>
        <dbReference type="Rhea" id="RHEA:21668"/>
        <dbReference type="ChEBI" id="CHEBI:15377"/>
        <dbReference type="ChEBI" id="CHEBI:15378"/>
        <dbReference type="ChEBI" id="CHEBI:30616"/>
        <dbReference type="ChEBI" id="CHEBI:43474"/>
        <dbReference type="ChEBI" id="CHEBI:57597"/>
        <dbReference type="ChEBI" id="CHEBI:456216"/>
        <dbReference type="EC" id="7.6.2.10"/>
    </reaction>
</comment>
<comment type="subunit">
    <text evidence="1">The complex is composed of two ATP-binding proteins (UgpC), two transmembrane proteins (UgpA and UgpE) and a solute-binding protein (UgpB).</text>
</comment>
<comment type="subcellular location">
    <subcellularLocation>
        <location evidence="1">Cell inner membrane</location>
        <topology evidence="1">Peripheral membrane protein</topology>
    </subcellularLocation>
</comment>
<comment type="similarity">
    <text evidence="1">Belongs to the ABC transporter superfamily. sn-glycerol-3-phosphate importer (TC 3.A.1.1.3) family.</text>
</comment>
<comment type="sequence caution" evidence="2">
    <conflict type="erroneous initiation">
        <sequence resource="EMBL-CDS" id="AAN82675"/>
    </conflict>
</comment>
<protein>
    <recommendedName>
        <fullName evidence="1">sn-glycerol-3-phosphate import ATP-binding protein UgpC</fullName>
        <ecNumber evidence="1">7.6.2.10</ecNumber>
    </recommendedName>
</protein>
<dbReference type="EC" id="7.6.2.10" evidence="1"/>
<dbReference type="EMBL" id="AE014075">
    <property type="protein sequence ID" value="AAN82675.1"/>
    <property type="status" value="ALT_INIT"/>
    <property type="molecule type" value="Genomic_DNA"/>
</dbReference>
<dbReference type="RefSeq" id="WP_000907826.1">
    <property type="nucleotide sequence ID" value="NZ_CP051263.1"/>
</dbReference>
<dbReference type="SMR" id="Q8FCQ2"/>
<dbReference type="STRING" id="199310.c4239"/>
<dbReference type="KEGG" id="ecc:c4239"/>
<dbReference type="eggNOG" id="COG3842">
    <property type="taxonomic scope" value="Bacteria"/>
</dbReference>
<dbReference type="HOGENOM" id="CLU_000604_1_1_6"/>
<dbReference type="Proteomes" id="UP000001410">
    <property type="component" value="Chromosome"/>
</dbReference>
<dbReference type="GO" id="GO:0055052">
    <property type="term" value="C:ATP-binding cassette (ABC) transporter complex, substrate-binding subunit-containing"/>
    <property type="evidence" value="ECO:0007669"/>
    <property type="project" value="TreeGrafter"/>
</dbReference>
<dbReference type="GO" id="GO:0015430">
    <property type="term" value="F:ABC-type glycerol-3-phosphate transporter activity"/>
    <property type="evidence" value="ECO:0007669"/>
    <property type="project" value="UniProtKB-EC"/>
</dbReference>
<dbReference type="GO" id="GO:0005524">
    <property type="term" value="F:ATP binding"/>
    <property type="evidence" value="ECO:0007669"/>
    <property type="project" value="UniProtKB-KW"/>
</dbReference>
<dbReference type="GO" id="GO:0016887">
    <property type="term" value="F:ATP hydrolysis activity"/>
    <property type="evidence" value="ECO:0007669"/>
    <property type="project" value="InterPro"/>
</dbReference>
<dbReference type="GO" id="GO:0008643">
    <property type="term" value="P:carbohydrate transport"/>
    <property type="evidence" value="ECO:0007669"/>
    <property type="project" value="InterPro"/>
</dbReference>
<dbReference type="GO" id="GO:0001407">
    <property type="term" value="P:glycerophosphodiester transmembrane transport"/>
    <property type="evidence" value="ECO:0007669"/>
    <property type="project" value="TreeGrafter"/>
</dbReference>
<dbReference type="CDD" id="cd03301">
    <property type="entry name" value="ABC_MalK_N"/>
    <property type="match status" value="1"/>
</dbReference>
<dbReference type="FunFam" id="3.40.50.300:FF:000042">
    <property type="entry name" value="Maltose/maltodextrin ABC transporter, ATP-binding protein"/>
    <property type="match status" value="1"/>
</dbReference>
<dbReference type="FunFam" id="2.40.50.100:FF:000032">
    <property type="entry name" value="sn-glycerol-3-phosphate import ATP-binding protein UgpC"/>
    <property type="match status" value="1"/>
</dbReference>
<dbReference type="FunFam" id="2.40.50.140:FF:000142">
    <property type="entry name" value="sn-glycerol-3-phosphate import ATP-binding protein UgpC"/>
    <property type="match status" value="1"/>
</dbReference>
<dbReference type="Gene3D" id="2.40.50.100">
    <property type="match status" value="1"/>
</dbReference>
<dbReference type="Gene3D" id="2.40.50.140">
    <property type="entry name" value="Nucleic acid-binding proteins"/>
    <property type="match status" value="1"/>
</dbReference>
<dbReference type="Gene3D" id="3.40.50.300">
    <property type="entry name" value="P-loop containing nucleotide triphosphate hydrolases"/>
    <property type="match status" value="1"/>
</dbReference>
<dbReference type="InterPro" id="IPR003593">
    <property type="entry name" value="AAA+_ATPase"/>
</dbReference>
<dbReference type="InterPro" id="IPR003439">
    <property type="entry name" value="ABC_transporter-like_ATP-bd"/>
</dbReference>
<dbReference type="InterPro" id="IPR017871">
    <property type="entry name" value="ABC_transporter-like_CS"/>
</dbReference>
<dbReference type="InterPro" id="IPR015855">
    <property type="entry name" value="ABC_transpr_MalK-like"/>
</dbReference>
<dbReference type="InterPro" id="IPR047641">
    <property type="entry name" value="ABC_transpr_MalK/UgpC-like"/>
</dbReference>
<dbReference type="InterPro" id="IPR008995">
    <property type="entry name" value="Mo/tungstate-bd_C_term_dom"/>
</dbReference>
<dbReference type="InterPro" id="IPR012340">
    <property type="entry name" value="NA-bd_OB-fold"/>
</dbReference>
<dbReference type="InterPro" id="IPR040582">
    <property type="entry name" value="OB_MalK-like"/>
</dbReference>
<dbReference type="InterPro" id="IPR027417">
    <property type="entry name" value="P-loop_NTPase"/>
</dbReference>
<dbReference type="NCBIfam" id="NF008653">
    <property type="entry name" value="PRK11650.1"/>
    <property type="match status" value="1"/>
</dbReference>
<dbReference type="PANTHER" id="PTHR43875">
    <property type="entry name" value="MALTODEXTRIN IMPORT ATP-BINDING PROTEIN MSMX"/>
    <property type="match status" value="1"/>
</dbReference>
<dbReference type="PANTHER" id="PTHR43875:SF12">
    <property type="entry name" value="SN-GLYCEROL-3-PHOSPHATE IMPORT ATP-BINDING PROTEIN UGPC"/>
    <property type="match status" value="1"/>
</dbReference>
<dbReference type="Pfam" id="PF00005">
    <property type="entry name" value="ABC_tran"/>
    <property type="match status" value="1"/>
</dbReference>
<dbReference type="Pfam" id="PF17912">
    <property type="entry name" value="OB_MalK"/>
    <property type="match status" value="1"/>
</dbReference>
<dbReference type="SMART" id="SM00382">
    <property type="entry name" value="AAA"/>
    <property type="match status" value="1"/>
</dbReference>
<dbReference type="SUPFAM" id="SSF50331">
    <property type="entry name" value="MOP-like"/>
    <property type="match status" value="1"/>
</dbReference>
<dbReference type="SUPFAM" id="SSF52540">
    <property type="entry name" value="P-loop containing nucleoside triphosphate hydrolases"/>
    <property type="match status" value="1"/>
</dbReference>
<dbReference type="PROSITE" id="PS00211">
    <property type="entry name" value="ABC_TRANSPORTER_1"/>
    <property type="match status" value="1"/>
</dbReference>
<dbReference type="PROSITE" id="PS50893">
    <property type="entry name" value="ABC_TRANSPORTER_2"/>
    <property type="match status" value="1"/>
</dbReference>
<dbReference type="PROSITE" id="PS51315">
    <property type="entry name" value="UGPC"/>
    <property type="match status" value="1"/>
</dbReference>
<feature type="chain" id="PRO_0000289753" description="sn-glycerol-3-phosphate import ATP-binding protein UgpC">
    <location>
        <begin position="1"/>
        <end position="356"/>
    </location>
</feature>
<feature type="domain" description="ABC transporter" evidence="1">
    <location>
        <begin position="4"/>
        <end position="235"/>
    </location>
</feature>
<feature type="binding site" evidence="1">
    <location>
        <begin position="37"/>
        <end position="44"/>
    </location>
    <ligand>
        <name>ATP</name>
        <dbReference type="ChEBI" id="CHEBI:30616"/>
    </ligand>
</feature>
<organism>
    <name type="scientific">Escherichia coli O6:H1 (strain CFT073 / ATCC 700928 / UPEC)</name>
    <dbReference type="NCBI Taxonomy" id="199310"/>
    <lineage>
        <taxon>Bacteria</taxon>
        <taxon>Pseudomonadati</taxon>
        <taxon>Pseudomonadota</taxon>
        <taxon>Gammaproteobacteria</taxon>
        <taxon>Enterobacterales</taxon>
        <taxon>Enterobacteriaceae</taxon>
        <taxon>Escherichia</taxon>
    </lineage>
</organism>
<gene>
    <name evidence="1" type="primary">ugpC</name>
    <name type="ordered locus">c4239</name>
</gene>
<sequence length="356" mass="39528">MAGLKLQAVTKSWDGKTQVIKPLTLDVADGEFIVMVGPSGCGKSTLLRMVAGLERVTTGDIWIDRKRVTEMEPKDRGIAMVFQNYALYPHMSVEENMAWGLKIRGMGKQQIAERVKEAARILELDGLLKRRPRELSGGQRQRVAMGRAIVREPAVFLFDEPLSNLDAKLRVQMRLELQQLHRRLKTTSLYVTHDQVEAMTLAQRVMVMNGGVAEQIGTPVEVYEKPASLFVASFIGSPAMNLLAGRVNNEGTHFELDGGITLPLNGGYRQYAGRKMTLGIRPEHIALSLQAEGGVPLVMDTLEILGADNLAHGRWGEQKLVVRLAHQERPTAGSTLWLHLPENQLHLFDGETGQRV</sequence>